<name>COX2_NOCFA</name>
<dbReference type="EC" id="7.1.1.9"/>
<dbReference type="EMBL" id="AP006618">
    <property type="protein sequence ID" value="BAD56554.1"/>
    <property type="molecule type" value="Genomic_DNA"/>
</dbReference>
<dbReference type="SMR" id="Q5YZ37"/>
<dbReference type="STRING" id="247156.NFA_17080"/>
<dbReference type="KEGG" id="nfa:NFA_17080"/>
<dbReference type="eggNOG" id="COG1622">
    <property type="taxonomic scope" value="Bacteria"/>
</dbReference>
<dbReference type="HOGENOM" id="CLU_036876_3_1_11"/>
<dbReference type="Proteomes" id="UP000006820">
    <property type="component" value="Chromosome"/>
</dbReference>
<dbReference type="GO" id="GO:0005886">
    <property type="term" value="C:plasma membrane"/>
    <property type="evidence" value="ECO:0007669"/>
    <property type="project" value="UniProtKB-SubCell"/>
</dbReference>
<dbReference type="GO" id="GO:0005507">
    <property type="term" value="F:copper ion binding"/>
    <property type="evidence" value="ECO:0007669"/>
    <property type="project" value="InterPro"/>
</dbReference>
<dbReference type="GO" id="GO:0004129">
    <property type="term" value="F:cytochrome-c oxidase activity"/>
    <property type="evidence" value="ECO:0007669"/>
    <property type="project" value="UniProtKB-EC"/>
</dbReference>
<dbReference type="GO" id="GO:0042773">
    <property type="term" value="P:ATP synthesis coupled electron transport"/>
    <property type="evidence" value="ECO:0007669"/>
    <property type="project" value="TreeGrafter"/>
</dbReference>
<dbReference type="Gene3D" id="1.10.287.90">
    <property type="match status" value="1"/>
</dbReference>
<dbReference type="Gene3D" id="2.60.40.420">
    <property type="entry name" value="Cupredoxins - blue copper proteins"/>
    <property type="match status" value="1"/>
</dbReference>
<dbReference type="InterPro" id="IPR045187">
    <property type="entry name" value="CcO_II"/>
</dbReference>
<dbReference type="InterPro" id="IPR002429">
    <property type="entry name" value="CcO_II-like_C"/>
</dbReference>
<dbReference type="InterPro" id="IPR001505">
    <property type="entry name" value="Copper_CuA"/>
</dbReference>
<dbReference type="InterPro" id="IPR008972">
    <property type="entry name" value="Cupredoxin"/>
</dbReference>
<dbReference type="InterPro" id="IPR036257">
    <property type="entry name" value="Cyt_c_oxidase_su2_TM_sf"/>
</dbReference>
<dbReference type="PANTHER" id="PTHR22888:SF9">
    <property type="entry name" value="CYTOCHROME C OXIDASE SUBUNIT 2"/>
    <property type="match status" value="1"/>
</dbReference>
<dbReference type="PANTHER" id="PTHR22888">
    <property type="entry name" value="CYTOCHROME C OXIDASE, SUBUNIT II"/>
    <property type="match status" value="1"/>
</dbReference>
<dbReference type="Pfam" id="PF00116">
    <property type="entry name" value="COX2"/>
    <property type="match status" value="1"/>
</dbReference>
<dbReference type="SUPFAM" id="SSF49503">
    <property type="entry name" value="Cupredoxins"/>
    <property type="match status" value="1"/>
</dbReference>
<dbReference type="SUPFAM" id="SSF81464">
    <property type="entry name" value="Cytochrome c oxidase subunit II-like, transmembrane region"/>
    <property type="match status" value="1"/>
</dbReference>
<dbReference type="PROSITE" id="PS00078">
    <property type="entry name" value="COX2"/>
    <property type="match status" value="1"/>
</dbReference>
<dbReference type="PROSITE" id="PS50857">
    <property type="entry name" value="COX2_CUA"/>
    <property type="match status" value="1"/>
</dbReference>
<evidence type="ECO:0000250" key="1"/>
<evidence type="ECO:0000255" key="2"/>
<evidence type="ECO:0000256" key="3">
    <source>
        <dbReference type="SAM" id="MobiDB-lite"/>
    </source>
</evidence>
<evidence type="ECO:0000305" key="4"/>
<protein>
    <recommendedName>
        <fullName>Probable cytochrome c oxidase subunit 2</fullName>
        <ecNumber>7.1.1.9</ecNumber>
    </recommendedName>
    <alternativeName>
        <fullName>Cytochrome aa3 subunit 2</fullName>
    </alternativeName>
    <alternativeName>
        <fullName>Cytochrome c oxidase polypeptide II</fullName>
    </alternativeName>
</protein>
<reference key="1">
    <citation type="journal article" date="2004" name="Proc. Natl. Acad. Sci. U.S.A.">
        <title>The complete genomic sequence of Nocardia farcinica IFM 10152.</title>
        <authorList>
            <person name="Ishikawa J."/>
            <person name="Yamashita A."/>
            <person name="Mikami Y."/>
            <person name="Hoshino Y."/>
            <person name="Kurita H."/>
            <person name="Hotta K."/>
            <person name="Shiba T."/>
            <person name="Hattori M."/>
        </authorList>
    </citation>
    <scope>NUCLEOTIDE SEQUENCE [LARGE SCALE GENOMIC DNA]</scope>
    <source>
        <strain>IFM 10152</strain>
    </source>
</reference>
<sequence>MCGDQEGVSVAHKASEEIGARPVRGRQGRILRRAGLAVSLGITAMLVSGCSIDNVWLRFGWPSGVTPQATRMRELWTWSIIAALAMGVLVWGLTFWTVVFHRKKKDSPEFPRQTGYNVPLELTYTAIPFVIIAVLFYFTVVVQNYVHEKVADPDVTVDVTAFQWNWKFGYREVDFKDGGYQFNGIDTAREEAAQAQLKEYEERVDTEHGHPQPGPVHGKPENDILSYLHYDTVETVGTSTEIPVLVLPTGKVIEFQLAAADVIHAFWVPEFLFKRDVMPNPKENHSDNVFQITEIEKEGAFVGRCAEMCGTYHSMMNFEVRAVSPEKFTRYLDERRAGKTNAEALAAIGESPVATSTRPFNTDRTVKSAAAPEAE</sequence>
<gene>
    <name type="primary">ctaC</name>
    <name type="ordered locus">NFA_17080</name>
</gene>
<organism>
    <name type="scientific">Nocardia farcinica (strain IFM 10152)</name>
    <dbReference type="NCBI Taxonomy" id="247156"/>
    <lineage>
        <taxon>Bacteria</taxon>
        <taxon>Bacillati</taxon>
        <taxon>Actinomycetota</taxon>
        <taxon>Actinomycetes</taxon>
        <taxon>Mycobacteriales</taxon>
        <taxon>Nocardiaceae</taxon>
        <taxon>Nocardia</taxon>
    </lineage>
</organism>
<accession>Q5YZ37</accession>
<comment type="function">
    <text evidence="1">Subunits I and II form the functional core of the enzyme complex. Electrons originating in cytochrome c are transferred via heme a and Cu(A) to the binuclear center formed by heme a3 and Cu(B) (By similarity).</text>
</comment>
<comment type="catalytic activity">
    <reaction>
        <text>4 Fe(II)-[cytochrome c] + O2 + 8 H(+)(in) = 4 Fe(III)-[cytochrome c] + 2 H2O + 4 H(+)(out)</text>
        <dbReference type="Rhea" id="RHEA:11436"/>
        <dbReference type="Rhea" id="RHEA-COMP:10350"/>
        <dbReference type="Rhea" id="RHEA-COMP:14399"/>
        <dbReference type="ChEBI" id="CHEBI:15377"/>
        <dbReference type="ChEBI" id="CHEBI:15378"/>
        <dbReference type="ChEBI" id="CHEBI:15379"/>
        <dbReference type="ChEBI" id="CHEBI:29033"/>
        <dbReference type="ChEBI" id="CHEBI:29034"/>
        <dbReference type="EC" id="7.1.1.9"/>
    </reaction>
</comment>
<comment type="cofactor">
    <cofactor evidence="1">
        <name>Cu cation</name>
        <dbReference type="ChEBI" id="CHEBI:23378"/>
    </cofactor>
    <text evidence="1">Binds a copper A center.</text>
</comment>
<comment type="cofactor">
    <cofactor evidence="1">
        <name>heme</name>
        <dbReference type="ChEBI" id="CHEBI:30413"/>
    </cofactor>
</comment>
<comment type="subcellular location">
    <subcellularLocation>
        <location evidence="4">Cell membrane</location>
        <topology evidence="4">Multi-pass membrane protein</topology>
    </subcellularLocation>
</comment>
<comment type="similarity">
    <text evidence="4">Belongs to the cytochrome c oxidase subunit 2 family.</text>
</comment>
<proteinExistence type="inferred from homology"/>
<feature type="chain" id="PRO_0000183718" description="Probable cytochrome c oxidase subunit 2">
    <location>
        <begin position="1"/>
        <end position="375"/>
    </location>
</feature>
<feature type="transmembrane region" description="Helical" evidence="2">
    <location>
        <begin position="36"/>
        <end position="56"/>
    </location>
</feature>
<feature type="transmembrane region" description="Helical" evidence="2">
    <location>
        <begin position="80"/>
        <end position="100"/>
    </location>
</feature>
<feature type="transmembrane region" description="Helical" evidence="2">
    <location>
        <begin position="122"/>
        <end position="142"/>
    </location>
</feature>
<feature type="region of interest" description="Disordered" evidence="3">
    <location>
        <begin position="353"/>
        <end position="375"/>
    </location>
</feature>
<feature type="compositionally biased region" description="Polar residues" evidence="3">
    <location>
        <begin position="353"/>
        <end position="363"/>
    </location>
</feature>
<feature type="binding site" evidence="2">
    <location>
        <position position="264"/>
    </location>
    <ligand>
        <name>Cu cation</name>
        <dbReference type="ChEBI" id="CHEBI:23378"/>
        <label>A</label>
    </ligand>
</feature>
<feature type="binding site" evidence="2">
    <location>
        <position position="305"/>
    </location>
    <ligand>
        <name>Cu cation</name>
        <dbReference type="ChEBI" id="CHEBI:23378"/>
        <label>A</label>
    </ligand>
</feature>
<feature type="binding site" evidence="2">
    <location>
        <position position="309"/>
    </location>
    <ligand>
        <name>Cu cation</name>
        <dbReference type="ChEBI" id="CHEBI:23378"/>
        <label>A</label>
    </ligand>
</feature>
<feature type="binding site" evidence="2">
    <location>
        <position position="313"/>
    </location>
    <ligand>
        <name>Cu cation</name>
        <dbReference type="ChEBI" id="CHEBI:23378"/>
        <label>A</label>
    </ligand>
</feature>
<keyword id="KW-1003">Cell membrane</keyword>
<keyword id="KW-0186">Copper</keyword>
<keyword id="KW-0249">Electron transport</keyword>
<keyword id="KW-0472">Membrane</keyword>
<keyword id="KW-0479">Metal-binding</keyword>
<keyword id="KW-1185">Reference proteome</keyword>
<keyword id="KW-0679">Respiratory chain</keyword>
<keyword id="KW-1278">Translocase</keyword>
<keyword id="KW-0812">Transmembrane</keyword>
<keyword id="KW-1133">Transmembrane helix</keyword>
<keyword id="KW-0813">Transport</keyword>